<organism>
    <name type="scientific">Carboxydothermus hydrogenoformans (strain ATCC BAA-161 / DSM 6008 / Z-2901)</name>
    <dbReference type="NCBI Taxonomy" id="246194"/>
    <lineage>
        <taxon>Bacteria</taxon>
        <taxon>Bacillati</taxon>
        <taxon>Bacillota</taxon>
        <taxon>Clostridia</taxon>
        <taxon>Thermoanaerobacterales</taxon>
        <taxon>Thermoanaerobacteraceae</taxon>
        <taxon>Carboxydothermus</taxon>
    </lineage>
</organism>
<dbReference type="EMBL" id="CP000141">
    <property type="protein sequence ID" value="ABB16061.1"/>
    <property type="molecule type" value="Genomic_DNA"/>
</dbReference>
<dbReference type="RefSeq" id="WP_011343352.1">
    <property type="nucleotide sequence ID" value="NC_007503.1"/>
</dbReference>
<dbReference type="SMR" id="Q3AF08"/>
<dbReference type="FunCoup" id="Q3AF08">
    <property type="interactions" value="438"/>
</dbReference>
<dbReference type="STRING" id="246194.CHY_0415"/>
<dbReference type="KEGG" id="chy:CHY_0415"/>
<dbReference type="eggNOG" id="COG0443">
    <property type="taxonomic scope" value="Bacteria"/>
</dbReference>
<dbReference type="HOGENOM" id="CLU_005965_3_0_9"/>
<dbReference type="InParanoid" id="Q3AF08"/>
<dbReference type="OrthoDB" id="9766019at2"/>
<dbReference type="Proteomes" id="UP000002706">
    <property type="component" value="Chromosome"/>
</dbReference>
<dbReference type="GO" id="GO:0005524">
    <property type="term" value="F:ATP binding"/>
    <property type="evidence" value="ECO:0007669"/>
    <property type="project" value="UniProtKB-UniRule"/>
</dbReference>
<dbReference type="GO" id="GO:0140662">
    <property type="term" value="F:ATP-dependent protein folding chaperone"/>
    <property type="evidence" value="ECO:0007669"/>
    <property type="project" value="InterPro"/>
</dbReference>
<dbReference type="GO" id="GO:0051082">
    <property type="term" value="F:unfolded protein binding"/>
    <property type="evidence" value="ECO:0007669"/>
    <property type="project" value="InterPro"/>
</dbReference>
<dbReference type="CDD" id="cd10234">
    <property type="entry name" value="ASKHA_NBD_HSP70_DnaK-like"/>
    <property type="match status" value="1"/>
</dbReference>
<dbReference type="FunFam" id="2.60.34.10:FF:000014">
    <property type="entry name" value="Chaperone protein DnaK HSP70"/>
    <property type="match status" value="1"/>
</dbReference>
<dbReference type="FunFam" id="1.20.1270.10:FF:000001">
    <property type="entry name" value="Molecular chaperone DnaK"/>
    <property type="match status" value="1"/>
</dbReference>
<dbReference type="FunFam" id="3.30.420.40:FF:000071">
    <property type="entry name" value="Molecular chaperone DnaK"/>
    <property type="match status" value="1"/>
</dbReference>
<dbReference type="FunFam" id="3.90.640.10:FF:000003">
    <property type="entry name" value="Molecular chaperone DnaK"/>
    <property type="match status" value="1"/>
</dbReference>
<dbReference type="Gene3D" id="1.20.1270.10">
    <property type="match status" value="1"/>
</dbReference>
<dbReference type="Gene3D" id="3.30.420.40">
    <property type="match status" value="2"/>
</dbReference>
<dbReference type="Gene3D" id="3.90.640.10">
    <property type="entry name" value="Actin, Chain A, domain 4"/>
    <property type="match status" value="1"/>
</dbReference>
<dbReference type="Gene3D" id="2.60.34.10">
    <property type="entry name" value="Substrate Binding Domain Of DNAk, Chain A, domain 1"/>
    <property type="match status" value="1"/>
</dbReference>
<dbReference type="HAMAP" id="MF_00332">
    <property type="entry name" value="DnaK"/>
    <property type="match status" value="1"/>
</dbReference>
<dbReference type="InterPro" id="IPR043129">
    <property type="entry name" value="ATPase_NBD"/>
</dbReference>
<dbReference type="InterPro" id="IPR012725">
    <property type="entry name" value="Chaperone_DnaK"/>
</dbReference>
<dbReference type="InterPro" id="IPR018181">
    <property type="entry name" value="Heat_shock_70_CS"/>
</dbReference>
<dbReference type="InterPro" id="IPR029048">
    <property type="entry name" value="HSP70_C_sf"/>
</dbReference>
<dbReference type="InterPro" id="IPR029047">
    <property type="entry name" value="HSP70_peptide-bd_sf"/>
</dbReference>
<dbReference type="InterPro" id="IPR013126">
    <property type="entry name" value="Hsp_70_fam"/>
</dbReference>
<dbReference type="NCBIfam" id="NF001413">
    <property type="entry name" value="PRK00290.1"/>
    <property type="match status" value="1"/>
</dbReference>
<dbReference type="NCBIfam" id="TIGR02350">
    <property type="entry name" value="prok_dnaK"/>
    <property type="match status" value="1"/>
</dbReference>
<dbReference type="PANTHER" id="PTHR19375">
    <property type="entry name" value="HEAT SHOCK PROTEIN 70KDA"/>
    <property type="match status" value="1"/>
</dbReference>
<dbReference type="Pfam" id="PF00012">
    <property type="entry name" value="HSP70"/>
    <property type="match status" value="1"/>
</dbReference>
<dbReference type="PRINTS" id="PR00301">
    <property type="entry name" value="HEATSHOCK70"/>
</dbReference>
<dbReference type="SUPFAM" id="SSF53067">
    <property type="entry name" value="Actin-like ATPase domain"/>
    <property type="match status" value="2"/>
</dbReference>
<dbReference type="SUPFAM" id="SSF100934">
    <property type="entry name" value="Heat shock protein 70kD (HSP70), C-terminal subdomain"/>
    <property type="match status" value="1"/>
</dbReference>
<dbReference type="SUPFAM" id="SSF100920">
    <property type="entry name" value="Heat shock protein 70kD (HSP70), peptide-binding domain"/>
    <property type="match status" value="1"/>
</dbReference>
<dbReference type="PROSITE" id="PS00297">
    <property type="entry name" value="HSP70_1"/>
    <property type="match status" value="1"/>
</dbReference>
<dbReference type="PROSITE" id="PS00329">
    <property type="entry name" value="HSP70_2"/>
    <property type="match status" value="1"/>
</dbReference>
<dbReference type="PROSITE" id="PS01036">
    <property type="entry name" value="HSP70_3"/>
    <property type="match status" value="1"/>
</dbReference>
<sequence>MGRIVGIDLGTTNSCIAVMEGGEVIVIPNAEGGRTTPSVVAFGKNGERIVGQVAKRQAITNPERTVISIKRHMGTNYRVKIDDKEYTPQEISAMILQKLKQDAEAYLGEKIEKAVITVPAYFTDAQRQATKDAGRIAGLEVLRIINEPTAAALAYGLDKEGEQTILVYDLGGGTFDVSILEIGDGVFEVKATAGNNRLGGDDFDQRIIDWLVENFKKEHGIDLRNDKMAMQRLKEAAEKAKIELSGVLETQINLPFIAANQNGPLHIDVTLTRAKFNELTADLVEATMGPTRQALADAGLKPEDIDKILLVGGSTRIPAVQEAIRKFFNKEPHKGINPDECVAIGAAIQAAVLAGEVKDVVLLDVTPLSLGIETLGGVFTKLIERNTTIPTSKSQIFTTAADNQTSVEIHVLQGERPMAADNVSLGRFTLTGIPPAPRGVPQIEVRFDIDVNGIVHVSAKDLGTGREQSITITNTSNLSEAEIKRMVEEAERYAEEDRKRKEEVETRNQADSLIYQAEKTLKDFKDKANPDLVARVEKAIAELREAMNSKDVQLMRAKMEELTKPLYELTSSIYQQSANQNQTQTGTNTQGNVYDADYKVNDDK</sequence>
<feature type="chain" id="PRO_0000225948" description="Chaperone protein DnaK">
    <location>
        <begin position="1"/>
        <end position="604"/>
    </location>
</feature>
<feature type="region of interest" description="Disordered" evidence="2">
    <location>
        <begin position="578"/>
        <end position="604"/>
    </location>
</feature>
<feature type="compositionally biased region" description="Low complexity" evidence="2">
    <location>
        <begin position="579"/>
        <end position="592"/>
    </location>
</feature>
<feature type="modified residue" description="Phosphothreonine; by autocatalysis" evidence="1">
    <location>
        <position position="174"/>
    </location>
</feature>
<name>DNAK_CARHZ</name>
<gene>
    <name evidence="1" type="primary">dnaK</name>
    <name type="ordered locus">CHY_0415</name>
</gene>
<reference key="1">
    <citation type="journal article" date="2005" name="PLoS Genet.">
        <title>Life in hot carbon monoxide: the complete genome sequence of Carboxydothermus hydrogenoformans Z-2901.</title>
        <authorList>
            <person name="Wu M."/>
            <person name="Ren Q."/>
            <person name="Durkin A.S."/>
            <person name="Daugherty S.C."/>
            <person name="Brinkac L.M."/>
            <person name="Dodson R.J."/>
            <person name="Madupu R."/>
            <person name="Sullivan S.A."/>
            <person name="Kolonay J.F."/>
            <person name="Nelson W.C."/>
            <person name="Tallon L.J."/>
            <person name="Jones K.M."/>
            <person name="Ulrich L.E."/>
            <person name="Gonzalez J.M."/>
            <person name="Zhulin I.B."/>
            <person name="Robb F.T."/>
            <person name="Eisen J.A."/>
        </authorList>
    </citation>
    <scope>NUCLEOTIDE SEQUENCE [LARGE SCALE GENOMIC DNA]</scope>
    <source>
        <strain>ATCC BAA-161 / DSM 6008 / Z-2901</strain>
    </source>
</reference>
<evidence type="ECO:0000255" key="1">
    <source>
        <dbReference type="HAMAP-Rule" id="MF_00332"/>
    </source>
</evidence>
<evidence type="ECO:0000256" key="2">
    <source>
        <dbReference type="SAM" id="MobiDB-lite"/>
    </source>
</evidence>
<protein>
    <recommendedName>
        <fullName evidence="1">Chaperone protein DnaK</fullName>
    </recommendedName>
    <alternativeName>
        <fullName evidence="1">HSP70</fullName>
    </alternativeName>
    <alternativeName>
        <fullName evidence="1">Heat shock 70 kDa protein</fullName>
    </alternativeName>
    <alternativeName>
        <fullName evidence="1">Heat shock protein 70</fullName>
    </alternativeName>
</protein>
<proteinExistence type="inferred from homology"/>
<comment type="function">
    <text evidence="1">Acts as a chaperone.</text>
</comment>
<comment type="induction">
    <text evidence="1">By stress conditions e.g. heat shock.</text>
</comment>
<comment type="similarity">
    <text evidence="1">Belongs to the heat shock protein 70 family.</text>
</comment>
<accession>Q3AF08</accession>
<keyword id="KW-0067">ATP-binding</keyword>
<keyword id="KW-0143">Chaperone</keyword>
<keyword id="KW-0547">Nucleotide-binding</keyword>
<keyword id="KW-0597">Phosphoprotein</keyword>
<keyword id="KW-1185">Reference proteome</keyword>
<keyword id="KW-0346">Stress response</keyword>